<evidence type="ECO:0000255" key="1">
    <source>
        <dbReference type="HAMAP-Rule" id="MF_00037"/>
    </source>
</evidence>
<evidence type="ECO:0000305" key="2"/>
<protein>
    <recommendedName>
        <fullName evidence="1">UDP-N-acetylenolpyruvoylglucosamine reductase</fullName>
        <ecNumber evidence="1">1.3.1.98</ecNumber>
    </recommendedName>
    <alternativeName>
        <fullName evidence="1">UDP-N-acetylmuramate dehydrogenase</fullName>
    </alternativeName>
</protein>
<proteinExistence type="inferred from homology"/>
<reference key="1">
    <citation type="journal article" date="2007" name="Genome Res.">
        <title>Lateral gene transfer between obligate intracellular bacteria: evidence from the Rickettsia massiliae genome.</title>
        <authorList>
            <person name="Blanc G."/>
            <person name="Ogata H."/>
            <person name="Robert C."/>
            <person name="Audic S."/>
            <person name="Claverie J.-M."/>
            <person name="Raoult D."/>
        </authorList>
    </citation>
    <scope>NUCLEOTIDE SEQUENCE [LARGE SCALE GENOMIC DNA]</scope>
    <source>
        <strain>Mtu5</strain>
    </source>
</reference>
<sequence length="295" mass="32759">MLILPIVKGEYKKDYNLKHLTWFKVGGNAEIFFKPLDREDLKSFLIQNKQKLPIKTFGAGSNIIIRDGGIEGVVIKLGQNFSNIEFIDNHLIVGSSCLNYNLAKFCQANAISGFEFLVGIPGTIGGGVAMNAGAYGSEFKDIIVQIEAIDFAGNFLTFTNEEIGFKYRSNNLPKNLIILKAVFKINKGDSENILLRMNEINNARSSTQPIKERTGGSTFANPAGRKSWELIDKVGLRGYRIGGASMSELHCNFMINNGDATAKDLEDLGDFVRQKVFEDSGVKLEWEIKRIGRHP</sequence>
<dbReference type="EC" id="1.3.1.98" evidence="1"/>
<dbReference type="EMBL" id="CP000683">
    <property type="protein sequence ID" value="ABV84595.1"/>
    <property type="status" value="ALT_INIT"/>
    <property type="molecule type" value="Genomic_DNA"/>
</dbReference>
<dbReference type="RefSeq" id="WP_014366075.1">
    <property type="nucleotide sequence ID" value="NC_009900.1"/>
</dbReference>
<dbReference type="SMR" id="A8F109"/>
<dbReference type="KEGG" id="rms:RMA_0340"/>
<dbReference type="HOGENOM" id="CLU_035304_1_0_5"/>
<dbReference type="UniPathway" id="UPA00219"/>
<dbReference type="Proteomes" id="UP000001311">
    <property type="component" value="Chromosome"/>
</dbReference>
<dbReference type="GO" id="GO:0005829">
    <property type="term" value="C:cytosol"/>
    <property type="evidence" value="ECO:0007669"/>
    <property type="project" value="TreeGrafter"/>
</dbReference>
<dbReference type="GO" id="GO:0071949">
    <property type="term" value="F:FAD binding"/>
    <property type="evidence" value="ECO:0007669"/>
    <property type="project" value="InterPro"/>
</dbReference>
<dbReference type="GO" id="GO:0008762">
    <property type="term" value="F:UDP-N-acetylmuramate dehydrogenase activity"/>
    <property type="evidence" value="ECO:0007669"/>
    <property type="project" value="UniProtKB-UniRule"/>
</dbReference>
<dbReference type="GO" id="GO:0051301">
    <property type="term" value="P:cell division"/>
    <property type="evidence" value="ECO:0007669"/>
    <property type="project" value="UniProtKB-KW"/>
</dbReference>
<dbReference type="GO" id="GO:0071555">
    <property type="term" value="P:cell wall organization"/>
    <property type="evidence" value="ECO:0007669"/>
    <property type="project" value="UniProtKB-KW"/>
</dbReference>
<dbReference type="GO" id="GO:0009252">
    <property type="term" value="P:peptidoglycan biosynthetic process"/>
    <property type="evidence" value="ECO:0007669"/>
    <property type="project" value="UniProtKB-UniRule"/>
</dbReference>
<dbReference type="GO" id="GO:0008360">
    <property type="term" value="P:regulation of cell shape"/>
    <property type="evidence" value="ECO:0007669"/>
    <property type="project" value="UniProtKB-KW"/>
</dbReference>
<dbReference type="Gene3D" id="3.30.465.10">
    <property type="match status" value="1"/>
</dbReference>
<dbReference type="Gene3D" id="3.90.78.10">
    <property type="entry name" value="UDP-N-acetylenolpyruvoylglucosamine reductase, C-terminal domain"/>
    <property type="match status" value="1"/>
</dbReference>
<dbReference type="Gene3D" id="3.30.43.10">
    <property type="entry name" value="Uridine Diphospho-n-acetylenolpyruvylglucosamine Reductase, domain 2"/>
    <property type="match status" value="1"/>
</dbReference>
<dbReference type="HAMAP" id="MF_00037">
    <property type="entry name" value="MurB"/>
    <property type="match status" value="1"/>
</dbReference>
<dbReference type="InterPro" id="IPR016166">
    <property type="entry name" value="FAD-bd_PCMH"/>
</dbReference>
<dbReference type="InterPro" id="IPR036318">
    <property type="entry name" value="FAD-bd_PCMH-like_sf"/>
</dbReference>
<dbReference type="InterPro" id="IPR016167">
    <property type="entry name" value="FAD-bd_PCMH_sub1"/>
</dbReference>
<dbReference type="InterPro" id="IPR016169">
    <property type="entry name" value="FAD-bd_PCMH_sub2"/>
</dbReference>
<dbReference type="InterPro" id="IPR003170">
    <property type="entry name" value="MurB"/>
</dbReference>
<dbReference type="InterPro" id="IPR011601">
    <property type="entry name" value="MurB_C"/>
</dbReference>
<dbReference type="InterPro" id="IPR036635">
    <property type="entry name" value="MurB_C_sf"/>
</dbReference>
<dbReference type="InterPro" id="IPR006094">
    <property type="entry name" value="Oxid_FAD_bind_N"/>
</dbReference>
<dbReference type="NCBIfam" id="TIGR00179">
    <property type="entry name" value="murB"/>
    <property type="match status" value="1"/>
</dbReference>
<dbReference type="NCBIfam" id="NF010480">
    <property type="entry name" value="PRK13905.1"/>
    <property type="match status" value="1"/>
</dbReference>
<dbReference type="PANTHER" id="PTHR21071">
    <property type="entry name" value="UDP-N-ACETYLENOLPYRUVOYLGLUCOSAMINE REDUCTASE"/>
    <property type="match status" value="1"/>
</dbReference>
<dbReference type="PANTHER" id="PTHR21071:SF4">
    <property type="entry name" value="UDP-N-ACETYLENOLPYRUVOYLGLUCOSAMINE REDUCTASE"/>
    <property type="match status" value="1"/>
</dbReference>
<dbReference type="Pfam" id="PF01565">
    <property type="entry name" value="FAD_binding_4"/>
    <property type="match status" value="1"/>
</dbReference>
<dbReference type="Pfam" id="PF02873">
    <property type="entry name" value="MurB_C"/>
    <property type="match status" value="1"/>
</dbReference>
<dbReference type="SUPFAM" id="SSF56176">
    <property type="entry name" value="FAD-binding/transporter-associated domain-like"/>
    <property type="match status" value="1"/>
</dbReference>
<dbReference type="SUPFAM" id="SSF56194">
    <property type="entry name" value="Uridine diphospho-N-Acetylenolpyruvylglucosamine reductase, MurB, C-terminal domain"/>
    <property type="match status" value="1"/>
</dbReference>
<dbReference type="PROSITE" id="PS51387">
    <property type="entry name" value="FAD_PCMH"/>
    <property type="match status" value="1"/>
</dbReference>
<accession>A8F109</accession>
<feature type="chain" id="PRO_0000332497" description="UDP-N-acetylenolpyruvoylglucosamine reductase">
    <location>
        <begin position="1"/>
        <end position="295"/>
    </location>
</feature>
<feature type="domain" description="FAD-binding PCMH-type" evidence="1">
    <location>
        <begin position="24"/>
        <end position="188"/>
    </location>
</feature>
<feature type="active site" evidence="1">
    <location>
        <position position="168"/>
    </location>
</feature>
<feature type="active site" description="Proton donor" evidence="1">
    <location>
        <position position="217"/>
    </location>
</feature>
<feature type="active site" evidence="1">
    <location>
        <position position="287"/>
    </location>
</feature>
<gene>
    <name evidence="1" type="primary">murB</name>
    <name type="ordered locus">RMA_0340</name>
</gene>
<organism>
    <name type="scientific">Rickettsia massiliae (strain Mtu5)</name>
    <dbReference type="NCBI Taxonomy" id="416276"/>
    <lineage>
        <taxon>Bacteria</taxon>
        <taxon>Pseudomonadati</taxon>
        <taxon>Pseudomonadota</taxon>
        <taxon>Alphaproteobacteria</taxon>
        <taxon>Rickettsiales</taxon>
        <taxon>Rickettsiaceae</taxon>
        <taxon>Rickettsieae</taxon>
        <taxon>Rickettsia</taxon>
        <taxon>spotted fever group</taxon>
    </lineage>
</organism>
<comment type="function">
    <text evidence="1">Cell wall formation.</text>
</comment>
<comment type="catalytic activity">
    <reaction evidence="1">
        <text>UDP-N-acetyl-alpha-D-muramate + NADP(+) = UDP-N-acetyl-3-O-(1-carboxyvinyl)-alpha-D-glucosamine + NADPH + H(+)</text>
        <dbReference type="Rhea" id="RHEA:12248"/>
        <dbReference type="ChEBI" id="CHEBI:15378"/>
        <dbReference type="ChEBI" id="CHEBI:57783"/>
        <dbReference type="ChEBI" id="CHEBI:58349"/>
        <dbReference type="ChEBI" id="CHEBI:68483"/>
        <dbReference type="ChEBI" id="CHEBI:70757"/>
        <dbReference type="EC" id="1.3.1.98"/>
    </reaction>
</comment>
<comment type="cofactor">
    <cofactor evidence="1">
        <name>FAD</name>
        <dbReference type="ChEBI" id="CHEBI:57692"/>
    </cofactor>
</comment>
<comment type="pathway">
    <text evidence="1">Cell wall biogenesis; peptidoglycan biosynthesis.</text>
</comment>
<comment type="subcellular location">
    <subcellularLocation>
        <location evidence="1">Cytoplasm</location>
    </subcellularLocation>
</comment>
<comment type="similarity">
    <text evidence="1">Belongs to the MurB family.</text>
</comment>
<comment type="sequence caution" evidence="2">
    <conflict type="erroneous initiation">
        <sequence resource="EMBL-CDS" id="ABV84595"/>
    </conflict>
</comment>
<keyword id="KW-0131">Cell cycle</keyword>
<keyword id="KW-0132">Cell division</keyword>
<keyword id="KW-0133">Cell shape</keyword>
<keyword id="KW-0961">Cell wall biogenesis/degradation</keyword>
<keyword id="KW-0963">Cytoplasm</keyword>
<keyword id="KW-0274">FAD</keyword>
<keyword id="KW-0285">Flavoprotein</keyword>
<keyword id="KW-0521">NADP</keyword>
<keyword id="KW-0560">Oxidoreductase</keyword>
<keyword id="KW-0573">Peptidoglycan synthesis</keyword>
<name>MURB_RICM5</name>